<protein>
    <recommendedName>
        <fullName evidence="1">Lactate utilization protein B 1</fullName>
    </recommendedName>
</protein>
<proteinExistence type="inferred from homology"/>
<organism>
    <name type="scientific">Bacillus mycoides (strain KBAB4)</name>
    <name type="common">Bacillus weihenstephanensis</name>
    <dbReference type="NCBI Taxonomy" id="315730"/>
    <lineage>
        <taxon>Bacteria</taxon>
        <taxon>Bacillati</taxon>
        <taxon>Bacillota</taxon>
        <taxon>Bacilli</taxon>
        <taxon>Bacillales</taxon>
        <taxon>Bacillaceae</taxon>
        <taxon>Bacillus</taxon>
        <taxon>Bacillus cereus group</taxon>
    </lineage>
</organism>
<comment type="function">
    <text evidence="1">Is involved in L-lactate degradation and allows cells to grow with lactate as the sole carbon source. Has probably a role as an electron transporter during oxidation of L-lactate.</text>
</comment>
<comment type="similarity">
    <text evidence="1">Belongs to the LutB/YkgF family.</text>
</comment>
<accession>A9VI77</accession>
<name>LUTB1_BACMK</name>
<keyword id="KW-0004">4Fe-4S</keyword>
<keyword id="KW-0249">Electron transport</keyword>
<keyword id="KW-0408">Iron</keyword>
<keyword id="KW-0411">Iron-sulfur</keyword>
<keyword id="KW-0479">Metal-binding</keyword>
<keyword id="KW-0677">Repeat</keyword>
<keyword id="KW-0813">Transport</keyword>
<gene>
    <name evidence="1" type="primary">lutB1</name>
    <name type="ordered locus">BcerKBAB4_0968</name>
</gene>
<sequence length="476" mass="52986">MGMKIGNDPFHKRTATGIGDQFMRQAVRKAQDGLRVKKLKATESLGNWEEWRALGEEIRKHTLENLDYYLYELSENIEKNGGFVYFAKTAEDAREYVKEIVKKKNAKKIVKSKSMVTEEISLNEAIEEAGAEVLETDLAEFILQVNDHDPPSHIVVPCLHKDKEHICEIFKTKLNYTGTSDPTEMARFVRSYLRDDFFAADIGVTGCNFAVAESGSISIVANEGNARLTTTLPKTLITVMGMERIVPTWEELDVLVTLLCRSSVGQKLTSYITGLTEPGGTDGPEEFHLVIVDNGRSDIVGTEFQSVLQCIRCAACINVCPVYRHIGGHAYGSIYPGPIGAVLTPLLGGYDEYKDLPYASSLCGACTEACPVKIPLHDLLIKHRSRIVEEKQSPVAWNVAMKGFEKAVKSPRLFSFAAKSAPYALKPLAKGDKIERGIGPLKAWTDARDFPVPKKQPFREWFEKHVKENDDGHSKS</sequence>
<reference key="1">
    <citation type="journal article" date="2008" name="Chem. Biol. Interact.">
        <title>Extending the Bacillus cereus group genomics to putative food-borne pathogens of different toxicity.</title>
        <authorList>
            <person name="Lapidus A."/>
            <person name="Goltsman E."/>
            <person name="Auger S."/>
            <person name="Galleron N."/>
            <person name="Segurens B."/>
            <person name="Dossat C."/>
            <person name="Land M.L."/>
            <person name="Broussolle V."/>
            <person name="Brillard J."/>
            <person name="Guinebretiere M.-H."/>
            <person name="Sanchis V."/>
            <person name="Nguen-the C."/>
            <person name="Lereclus D."/>
            <person name="Richardson P."/>
            <person name="Wincker P."/>
            <person name="Weissenbach J."/>
            <person name="Ehrlich S.D."/>
            <person name="Sorokin A."/>
        </authorList>
    </citation>
    <scope>NUCLEOTIDE SEQUENCE [LARGE SCALE GENOMIC DNA]</scope>
    <source>
        <strain>KBAB4</strain>
    </source>
</reference>
<dbReference type="EMBL" id="CP000903">
    <property type="protein sequence ID" value="ABY42220.1"/>
    <property type="molecule type" value="Genomic_DNA"/>
</dbReference>
<dbReference type="RefSeq" id="WP_012260512.1">
    <property type="nucleotide sequence ID" value="NC_010184.1"/>
</dbReference>
<dbReference type="KEGG" id="bwe:BcerKBAB4_0968"/>
<dbReference type="eggNOG" id="COG1139">
    <property type="taxonomic scope" value="Bacteria"/>
</dbReference>
<dbReference type="HOGENOM" id="CLU_027059_2_0_9"/>
<dbReference type="Proteomes" id="UP000002154">
    <property type="component" value="Chromosome"/>
</dbReference>
<dbReference type="GO" id="GO:0051539">
    <property type="term" value="F:4 iron, 4 sulfur cluster binding"/>
    <property type="evidence" value="ECO:0007669"/>
    <property type="project" value="UniProtKB-KW"/>
</dbReference>
<dbReference type="GO" id="GO:0046872">
    <property type="term" value="F:metal ion binding"/>
    <property type="evidence" value="ECO:0007669"/>
    <property type="project" value="UniProtKB-KW"/>
</dbReference>
<dbReference type="GO" id="GO:0006089">
    <property type="term" value="P:lactate metabolic process"/>
    <property type="evidence" value="ECO:0007669"/>
    <property type="project" value="UniProtKB-UniRule"/>
</dbReference>
<dbReference type="Gene3D" id="1.10.1060.10">
    <property type="entry name" value="Alpha-helical ferredoxin"/>
    <property type="match status" value="1"/>
</dbReference>
<dbReference type="Gene3D" id="3.40.50.10420">
    <property type="entry name" value="NagB/RpiA/CoA transferase-like"/>
    <property type="match status" value="1"/>
</dbReference>
<dbReference type="HAMAP" id="MF_02103">
    <property type="entry name" value="LutB"/>
    <property type="match status" value="1"/>
</dbReference>
<dbReference type="InterPro" id="IPR017896">
    <property type="entry name" value="4Fe4S_Fe-S-bd"/>
</dbReference>
<dbReference type="InterPro" id="IPR017900">
    <property type="entry name" value="4Fe4S_Fe_S_CS"/>
</dbReference>
<dbReference type="InterPro" id="IPR024185">
    <property type="entry name" value="FTHF_cligase-like_sf"/>
</dbReference>
<dbReference type="InterPro" id="IPR009051">
    <property type="entry name" value="Helical_ferredxn"/>
</dbReference>
<dbReference type="InterPro" id="IPR003741">
    <property type="entry name" value="LUD_dom"/>
</dbReference>
<dbReference type="InterPro" id="IPR022825">
    <property type="entry name" value="LutB"/>
</dbReference>
<dbReference type="InterPro" id="IPR004452">
    <property type="entry name" value="LutB/LldF"/>
</dbReference>
<dbReference type="InterPro" id="IPR024569">
    <property type="entry name" value="LutB_C"/>
</dbReference>
<dbReference type="InterPro" id="IPR037171">
    <property type="entry name" value="NagB/RpiA_transferase-like"/>
</dbReference>
<dbReference type="NCBIfam" id="TIGR00273">
    <property type="entry name" value="LutB/LldF family L-lactate oxidation iron-sulfur protein"/>
    <property type="match status" value="1"/>
</dbReference>
<dbReference type="PANTHER" id="PTHR47153">
    <property type="entry name" value="LACTATE UTILIZATION PROTEIN B"/>
    <property type="match status" value="1"/>
</dbReference>
<dbReference type="PANTHER" id="PTHR47153:SF2">
    <property type="entry name" value="LACTATE UTILIZATION PROTEIN B"/>
    <property type="match status" value="1"/>
</dbReference>
<dbReference type="Pfam" id="PF13183">
    <property type="entry name" value="Fer4_8"/>
    <property type="match status" value="1"/>
</dbReference>
<dbReference type="Pfam" id="PF02589">
    <property type="entry name" value="LUD_dom"/>
    <property type="match status" value="1"/>
</dbReference>
<dbReference type="Pfam" id="PF11870">
    <property type="entry name" value="LutB_C"/>
    <property type="match status" value="1"/>
</dbReference>
<dbReference type="SUPFAM" id="SSF46548">
    <property type="entry name" value="alpha-helical ferredoxin"/>
    <property type="match status" value="1"/>
</dbReference>
<dbReference type="SUPFAM" id="SSF100950">
    <property type="entry name" value="NagB/RpiA/CoA transferase-like"/>
    <property type="match status" value="1"/>
</dbReference>
<dbReference type="PROSITE" id="PS00198">
    <property type="entry name" value="4FE4S_FER_1"/>
    <property type="match status" value="1"/>
</dbReference>
<feature type="chain" id="PRO_0000383978" description="Lactate utilization protein B 1">
    <location>
        <begin position="1"/>
        <end position="476"/>
    </location>
</feature>
<feature type="domain" description="4Fe-4S ferredoxin-type 1" evidence="1">
    <location>
        <begin position="301"/>
        <end position="331"/>
    </location>
</feature>
<feature type="domain" description="4Fe-4S ferredoxin-type 2" evidence="1">
    <location>
        <begin position="350"/>
        <end position="379"/>
    </location>
</feature>
<feature type="binding site" evidence="1">
    <location>
        <position position="310"/>
    </location>
    <ligand>
        <name>[4Fe-4S] cluster</name>
        <dbReference type="ChEBI" id="CHEBI:49883"/>
        <label>1</label>
    </ligand>
</feature>
<feature type="binding site" evidence="1">
    <location>
        <position position="313"/>
    </location>
    <ligand>
        <name>[4Fe-4S] cluster</name>
        <dbReference type="ChEBI" id="CHEBI:49883"/>
        <label>1</label>
    </ligand>
</feature>
<feature type="binding site" evidence="1">
    <location>
        <position position="316"/>
    </location>
    <ligand>
        <name>[4Fe-4S] cluster</name>
        <dbReference type="ChEBI" id="CHEBI:49883"/>
        <label>1</label>
    </ligand>
</feature>
<feature type="binding site" evidence="1">
    <location>
        <position position="320"/>
    </location>
    <ligand>
        <name>[4Fe-4S] cluster</name>
        <dbReference type="ChEBI" id="CHEBI:49883"/>
        <label>2</label>
    </ligand>
</feature>
<feature type="binding site" evidence="1">
    <location>
        <position position="363"/>
    </location>
    <ligand>
        <name>[4Fe-4S] cluster</name>
        <dbReference type="ChEBI" id="CHEBI:49883"/>
        <label>2</label>
    </ligand>
</feature>
<feature type="binding site" evidence="1">
    <location>
        <position position="366"/>
    </location>
    <ligand>
        <name>[4Fe-4S] cluster</name>
        <dbReference type="ChEBI" id="CHEBI:49883"/>
        <label>2</label>
    </ligand>
</feature>
<feature type="binding site" evidence="1">
    <location>
        <position position="370"/>
    </location>
    <ligand>
        <name>[4Fe-4S] cluster</name>
        <dbReference type="ChEBI" id="CHEBI:49883"/>
        <label>1</label>
    </ligand>
</feature>
<evidence type="ECO:0000255" key="1">
    <source>
        <dbReference type="HAMAP-Rule" id="MF_02103"/>
    </source>
</evidence>